<name>FETP_NEIMA</name>
<gene>
    <name type="ordered locus">NMA0419</name>
</gene>
<organism>
    <name type="scientific">Neisseria meningitidis serogroup A / serotype 4A (strain DSM 15465 / Z2491)</name>
    <dbReference type="NCBI Taxonomy" id="122587"/>
    <lineage>
        <taxon>Bacteria</taxon>
        <taxon>Pseudomonadati</taxon>
        <taxon>Pseudomonadota</taxon>
        <taxon>Betaproteobacteria</taxon>
        <taxon>Neisseriales</taxon>
        <taxon>Neisseriaceae</taxon>
        <taxon>Neisseria</taxon>
    </lineage>
</organism>
<proteinExistence type="inferred from homology"/>
<accession>P67615</accession>
<accession>A1IPN6</accession>
<accession>Q9JQP5</accession>
<evidence type="ECO:0000255" key="1">
    <source>
        <dbReference type="HAMAP-Rule" id="MF_00686"/>
    </source>
</evidence>
<feature type="chain" id="PRO_0000214492" description="Probable Fe(2+)-trafficking protein">
    <location>
        <begin position="1"/>
        <end position="88"/>
    </location>
</feature>
<protein>
    <recommendedName>
        <fullName evidence="1">Probable Fe(2+)-trafficking protein</fullName>
    </recommendedName>
</protein>
<keyword id="KW-0408">Iron</keyword>
<reference key="1">
    <citation type="journal article" date="2000" name="Nature">
        <title>Complete DNA sequence of a serogroup A strain of Neisseria meningitidis Z2491.</title>
        <authorList>
            <person name="Parkhill J."/>
            <person name="Achtman M."/>
            <person name="James K.D."/>
            <person name="Bentley S.D."/>
            <person name="Churcher C.M."/>
            <person name="Klee S.R."/>
            <person name="Morelli G."/>
            <person name="Basham D."/>
            <person name="Brown D."/>
            <person name="Chillingworth T."/>
            <person name="Davies R.M."/>
            <person name="Davis P."/>
            <person name="Devlin K."/>
            <person name="Feltwell T."/>
            <person name="Hamlin N."/>
            <person name="Holroyd S."/>
            <person name="Jagels K."/>
            <person name="Leather S."/>
            <person name="Moule S."/>
            <person name="Mungall K.L."/>
            <person name="Quail M.A."/>
            <person name="Rajandream M.A."/>
            <person name="Rutherford K.M."/>
            <person name="Simmonds M."/>
            <person name="Skelton J."/>
            <person name="Whitehead S."/>
            <person name="Spratt B.G."/>
            <person name="Barrell B.G."/>
        </authorList>
    </citation>
    <scope>NUCLEOTIDE SEQUENCE [LARGE SCALE GENOMIC DNA]</scope>
    <source>
        <strain>DSM 15465 / Z2491</strain>
    </source>
</reference>
<sequence>MARMVFCVKLNKEAEGMKFPPLPNELGKRIFENVSQEAWAAWTRHQTMLINENRLSLADPRAREYLAQQMEQYFFGDGADAVQGYVPQ</sequence>
<comment type="function">
    <text evidence="1">Could be a mediator in iron transactions between iron acquisition and iron-requiring processes, such as synthesis and/or repair of Fe-S clusters in biosynthetic enzymes.</text>
</comment>
<comment type="similarity">
    <text evidence="1">Belongs to the Fe(2+)-trafficking protein family.</text>
</comment>
<dbReference type="EMBL" id="AL157959">
    <property type="protein sequence ID" value="CAM07707.1"/>
    <property type="molecule type" value="Genomic_DNA"/>
</dbReference>
<dbReference type="RefSeq" id="WP_002214948.1">
    <property type="nucleotide sequence ID" value="NC_003116.1"/>
</dbReference>
<dbReference type="SMR" id="P67615"/>
<dbReference type="EnsemblBacteria" id="CAM07707">
    <property type="protein sequence ID" value="CAM07707"/>
    <property type="gene ID" value="NMA0419"/>
</dbReference>
<dbReference type="KEGG" id="nma:NMA0419"/>
<dbReference type="HOGENOM" id="CLU_170994_0_0_4"/>
<dbReference type="Proteomes" id="UP000000626">
    <property type="component" value="Chromosome"/>
</dbReference>
<dbReference type="GO" id="GO:0005829">
    <property type="term" value="C:cytosol"/>
    <property type="evidence" value="ECO:0007669"/>
    <property type="project" value="TreeGrafter"/>
</dbReference>
<dbReference type="GO" id="GO:0005506">
    <property type="term" value="F:iron ion binding"/>
    <property type="evidence" value="ECO:0007669"/>
    <property type="project" value="UniProtKB-UniRule"/>
</dbReference>
<dbReference type="GO" id="GO:0034599">
    <property type="term" value="P:cellular response to oxidative stress"/>
    <property type="evidence" value="ECO:0007669"/>
    <property type="project" value="TreeGrafter"/>
</dbReference>
<dbReference type="FunFam" id="1.10.3880.10:FF:000001">
    <property type="entry name" value="Probable Fe(2+)-trafficking protein"/>
    <property type="match status" value="1"/>
</dbReference>
<dbReference type="Gene3D" id="1.10.3880.10">
    <property type="entry name" value="Fe(II) trafficking protein YggX"/>
    <property type="match status" value="1"/>
</dbReference>
<dbReference type="HAMAP" id="MF_00686">
    <property type="entry name" value="Fe_traffic_YggX"/>
    <property type="match status" value="1"/>
</dbReference>
<dbReference type="InterPro" id="IPR007457">
    <property type="entry name" value="Fe_traffick_prot_YggX"/>
</dbReference>
<dbReference type="InterPro" id="IPR036766">
    <property type="entry name" value="Fe_traffick_prot_YggX_sf"/>
</dbReference>
<dbReference type="NCBIfam" id="NF003817">
    <property type="entry name" value="PRK05408.1"/>
    <property type="match status" value="1"/>
</dbReference>
<dbReference type="PANTHER" id="PTHR36965">
    <property type="entry name" value="FE(2+)-TRAFFICKING PROTEIN-RELATED"/>
    <property type="match status" value="1"/>
</dbReference>
<dbReference type="PANTHER" id="PTHR36965:SF1">
    <property type="entry name" value="FE(2+)-TRAFFICKING PROTEIN-RELATED"/>
    <property type="match status" value="1"/>
</dbReference>
<dbReference type="Pfam" id="PF04362">
    <property type="entry name" value="Iron_traffic"/>
    <property type="match status" value="1"/>
</dbReference>
<dbReference type="PIRSF" id="PIRSF029827">
    <property type="entry name" value="Fe_traffic_YggX"/>
    <property type="match status" value="1"/>
</dbReference>
<dbReference type="SUPFAM" id="SSF111148">
    <property type="entry name" value="YggX-like"/>
    <property type="match status" value="1"/>
</dbReference>